<name>KYNU_XANC8</name>
<keyword id="KW-0378">Hydrolase</keyword>
<keyword id="KW-0662">Pyridine nucleotide biosynthesis</keyword>
<keyword id="KW-0663">Pyridoxal phosphate</keyword>
<sequence length="424" mass="46200">MMTDPLSRSHAAALDAADPLRALRDAFVFPQHGGQDQTYFVGNSLGLQPRQARAMVSEVLDQWGALAVEGHFTGPTQWLTYHQLVRDGLARVVGAQPDEVVAMNTLTVNLHLMMASFYRPSAERAAILIEAGAFPSDRHAVESQLRLHGLDPDTHLIEVEPDAADGTLSMDAIAATIAQHGPRLALVLWPGIQYRTGQAFALGEIARLARAQGAAVGFDLAHAVGNIPLSLHDDGVDFAVWCHYKYLNAGPGAVGGCFVHARHAHSNLPRMAGWWGHEQPTRFRMEPQFVPSPGAEGWQLSNPPVLALAPLRASLELFDQAGMPALRAKSEQLTGHLEQLIHTRVPQVLQIVTPADPAQRGCQLSLRVAGGRTQGRALFEYLQSVGVLGDWREPDVIRIAPVPLYNRFCDLHQLVEHVETWAAA</sequence>
<protein>
    <recommendedName>
        <fullName evidence="1">Kynureninase</fullName>
        <ecNumber evidence="1">3.7.1.3</ecNumber>
    </recommendedName>
    <alternativeName>
        <fullName evidence="1">L-kynurenine hydrolase</fullName>
    </alternativeName>
</protein>
<accession>Q4UT93</accession>
<proteinExistence type="inferred from homology"/>
<feature type="chain" id="PRO_0000357016" description="Kynureninase">
    <location>
        <begin position="1"/>
        <end position="424"/>
    </location>
</feature>
<feature type="binding site" evidence="1">
    <location>
        <position position="106"/>
    </location>
    <ligand>
        <name>pyridoxal 5'-phosphate</name>
        <dbReference type="ChEBI" id="CHEBI:597326"/>
    </ligand>
</feature>
<feature type="binding site" evidence="1">
    <location>
        <position position="107"/>
    </location>
    <ligand>
        <name>pyridoxal 5'-phosphate</name>
        <dbReference type="ChEBI" id="CHEBI:597326"/>
    </ligand>
</feature>
<feature type="binding site" evidence="1">
    <location>
        <begin position="134"/>
        <end position="137"/>
    </location>
    <ligand>
        <name>pyridoxal 5'-phosphate</name>
        <dbReference type="ChEBI" id="CHEBI:597326"/>
    </ligand>
</feature>
<feature type="binding site" evidence="1">
    <location>
        <position position="219"/>
    </location>
    <ligand>
        <name>pyridoxal 5'-phosphate</name>
        <dbReference type="ChEBI" id="CHEBI:597326"/>
    </ligand>
</feature>
<feature type="binding site" evidence="1">
    <location>
        <position position="222"/>
    </location>
    <ligand>
        <name>pyridoxal 5'-phosphate</name>
        <dbReference type="ChEBI" id="CHEBI:597326"/>
    </ligand>
</feature>
<feature type="binding site" evidence="1">
    <location>
        <position position="244"/>
    </location>
    <ligand>
        <name>pyridoxal 5'-phosphate</name>
        <dbReference type="ChEBI" id="CHEBI:597326"/>
    </ligand>
</feature>
<feature type="binding site" evidence="1">
    <location>
        <position position="274"/>
    </location>
    <ligand>
        <name>pyridoxal 5'-phosphate</name>
        <dbReference type="ChEBI" id="CHEBI:597326"/>
    </ligand>
</feature>
<feature type="binding site" evidence="1">
    <location>
        <position position="302"/>
    </location>
    <ligand>
        <name>pyridoxal 5'-phosphate</name>
        <dbReference type="ChEBI" id="CHEBI:597326"/>
    </ligand>
</feature>
<feature type="modified residue" description="N6-(pyridoxal phosphate)lysine" evidence="1">
    <location>
        <position position="245"/>
    </location>
</feature>
<comment type="function">
    <text evidence="1">Catalyzes the cleavage of L-kynurenine (L-Kyn) and L-3-hydroxykynurenine (L-3OHKyn) into anthranilic acid (AA) and 3-hydroxyanthranilic acid (3-OHAA), respectively.</text>
</comment>
<comment type="catalytic activity">
    <reaction evidence="1">
        <text>L-kynurenine + H2O = anthranilate + L-alanine + H(+)</text>
        <dbReference type="Rhea" id="RHEA:16813"/>
        <dbReference type="ChEBI" id="CHEBI:15377"/>
        <dbReference type="ChEBI" id="CHEBI:15378"/>
        <dbReference type="ChEBI" id="CHEBI:16567"/>
        <dbReference type="ChEBI" id="CHEBI:57959"/>
        <dbReference type="ChEBI" id="CHEBI:57972"/>
        <dbReference type="EC" id="3.7.1.3"/>
    </reaction>
</comment>
<comment type="catalytic activity">
    <reaction evidence="1">
        <text>3-hydroxy-L-kynurenine + H2O = 3-hydroxyanthranilate + L-alanine + H(+)</text>
        <dbReference type="Rhea" id="RHEA:25143"/>
        <dbReference type="ChEBI" id="CHEBI:15377"/>
        <dbReference type="ChEBI" id="CHEBI:15378"/>
        <dbReference type="ChEBI" id="CHEBI:36559"/>
        <dbReference type="ChEBI" id="CHEBI:57972"/>
        <dbReference type="ChEBI" id="CHEBI:58125"/>
        <dbReference type="EC" id="3.7.1.3"/>
    </reaction>
</comment>
<comment type="cofactor">
    <cofactor evidence="1">
        <name>pyridoxal 5'-phosphate</name>
        <dbReference type="ChEBI" id="CHEBI:597326"/>
    </cofactor>
</comment>
<comment type="pathway">
    <text evidence="1">Amino-acid degradation; L-kynurenine degradation; L-alanine and anthranilate from L-kynurenine: step 1/1.</text>
</comment>
<comment type="pathway">
    <text evidence="1">Cofactor biosynthesis; NAD(+) biosynthesis; quinolinate from L-kynurenine: step 2/3.</text>
</comment>
<comment type="subunit">
    <text evidence="1">Homodimer.</text>
</comment>
<comment type="similarity">
    <text evidence="1">Belongs to the kynureninase family.</text>
</comment>
<reference key="1">
    <citation type="journal article" date="2005" name="Genome Res.">
        <title>Comparative and functional genomic analyses of the pathogenicity of phytopathogen Xanthomonas campestris pv. campestris.</title>
        <authorList>
            <person name="Qian W."/>
            <person name="Jia Y."/>
            <person name="Ren S.-X."/>
            <person name="He Y.-Q."/>
            <person name="Feng J.-X."/>
            <person name="Lu L.-F."/>
            <person name="Sun Q."/>
            <person name="Ying G."/>
            <person name="Tang D.-J."/>
            <person name="Tang H."/>
            <person name="Wu W."/>
            <person name="Hao P."/>
            <person name="Wang L."/>
            <person name="Jiang B.-L."/>
            <person name="Zeng S."/>
            <person name="Gu W.-Y."/>
            <person name="Lu G."/>
            <person name="Rong L."/>
            <person name="Tian Y."/>
            <person name="Yao Z."/>
            <person name="Fu G."/>
            <person name="Chen B."/>
            <person name="Fang R."/>
            <person name="Qiang B."/>
            <person name="Chen Z."/>
            <person name="Zhao G.-P."/>
            <person name="Tang J.-L."/>
            <person name="He C."/>
        </authorList>
    </citation>
    <scope>NUCLEOTIDE SEQUENCE [LARGE SCALE GENOMIC DNA]</scope>
    <source>
        <strain>8004</strain>
    </source>
</reference>
<evidence type="ECO:0000255" key="1">
    <source>
        <dbReference type="HAMAP-Rule" id="MF_01970"/>
    </source>
</evidence>
<dbReference type="EC" id="3.7.1.3" evidence="1"/>
<dbReference type="EMBL" id="CP000050">
    <property type="protein sequence ID" value="AAY49730.1"/>
    <property type="molecule type" value="Genomic_DNA"/>
</dbReference>
<dbReference type="SMR" id="Q4UT93"/>
<dbReference type="KEGG" id="xcb:XC_2681"/>
<dbReference type="HOGENOM" id="CLU_003433_4_0_6"/>
<dbReference type="UniPathway" id="UPA00253">
    <property type="reaction ID" value="UER00329"/>
</dbReference>
<dbReference type="UniPathway" id="UPA00334">
    <property type="reaction ID" value="UER00455"/>
</dbReference>
<dbReference type="Proteomes" id="UP000000420">
    <property type="component" value="Chromosome"/>
</dbReference>
<dbReference type="GO" id="GO:0005737">
    <property type="term" value="C:cytoplasm"/>
    <property type="evidence" value="ECO:0007669"/>
    <property type="project" value="InterPro"/>
</dbReference>
<dbReference type="GO" id="GO:0030429">
    <property type="term" value="F:kynureninase activity"/>
    <property type="evidence" value="ECO:0007669"/>
    <property type="project" value="UniProtKB-UniRule"/>
</dbReference>
<dbReference type="GO" id="GO:0030170">
    <property type="term" value="F:pyridoxal phosphate binding"/>
    <property type="evidence" value="ECO:0007669"/>
    <property type="project" value="UniProtKB-UniRule"/>
</dbReference>
<dbReference type="GO" id="GO:0043420">
    <property type="term" value="P:anthranilate metabolic process"/>
    <property type="evidence" value="ECO:0007669"/>
    <property type="project" value="TreeGrafter"/>
</dbReference>
<dbReference type="GO" id="GO:0097053">
    <property type="term" value="P:L-kynurenine catabolic process"/>
    <property type="evidence" value="ECO:0007669"/>
    <property type="project" value="UniProtKB-UniRule"/>
</dbReference>
<dbReference type="GO" id="GO:0019441">
    <property type="term" value="P:L-tryptophan catabolic process to kynurenine"/>
    <property type="evidence" value="ECO:0007669"/>
    <property type="project" value="TreeGrafter"/>
</dbReference>
<dbReference type="GO" id="GO:0009435">
    <property type="term" value="P:NAD biosynthetic process"/>
    <property type="evidence" value="ECO:0007669"/>
    <property type="project" value="UniProtKB-UniPathway"/>
</dbReference>
<dbReference type="GO" id="GO:0019805">
    <property type="term" value="P:quinolinate biosynthetic process"/>
    <property type="evidence" value="ECO:0007669"/>
    <property type="project" value="UniProtKB-UniRule"/>
</dbReference>
<dbReference type="FunFam" id="3.40.640.10:FF:000031">
    <property type="entry name" value="Kynureninase"/>
    <property type="match status" value="1"/>
</dbReference>
<dbReference type="Gene3D" id="3.90.1150.10">
    <property type="entry name" value="Aspartate Aminotransferase, domain 1"/>
    <property type="match status" value="1"/>
</dbReference>
<dbReference type="Gene3D" id="3.40.640.10">
    <property type="entry name" value="Type I PLP-dependent aspartate aminotransferase-like (Major domain)"/>
    <property type="match status" value="1"/>
</dbReference>
<dbReference type="HAMAP" id="MF_01970">
    <property type="entry name" value="Kynureninase"/>
    <property type="match status" value="1"/>
</dbReference>
<dbReference type="InterPro" id="IPR010111">
    <property type="entry name" value="Kynureninase"/>
</dbReference>
<dbReference type="InterPro" id="IPR015424">
    <property type="entry name" value="PyrdxlP-dep_Trfase"/>
</dbReference>
<dbReference type="InterPro" id="IPR015421">
    <property type="entry name" value="PyrdxlP-dep_Trfase_major"/>
</dbReference>
<dbReference type="InterPro" id="IPR015422">
    <property type="entry name" value="PyrdxlP-dep_Trfase_small"/>
</dbReference>
<dbReference type="NCBIfam" id="TIGR01814">
    <property type="entry name" value="kynureninase"/>
    <property type="match status" value="1"/>
</dbReference>
<dbReference type="PANTHER" id="PTHR14084">
    <property type="entry name" value="KYNURENINASE"/>
    <property type="match status" value="1"/>
</dbReference>
<dbReference type="PANTHER" id="PTHR14084:SF0">
    <property type="entry name" value="KYNURENINASE"/>
    <property type="match status" value="1"/>
</dbReference>
<dbReference type="Pfam" id="PF22580">
    <property type="entry name" value="KYNU_C"/>
    <property type="match status" value="1"/>
</dbReference>
<dbReference type="PIRSF" id="PIRSF038800">
    <property type="entry name" value="KYNU"/>
    <property type="match status" value="1"/>
</dbReference>
<dbReference type="SUPFAM" id="SSF53383">
    <property type="entry name" value="PLP-dependent transferases"/>
    <property type="match status" value="1"/>
</dbReference>
<gene>
    <name evidence="1" type="primary">kynU</name>
    <name type="ordered locus">XC_2681</name>
</gene>
<organism>
    <name type="scientific">Xanthomonas campestris pv. campestris (strain 8004)</name>
    <dbReference type="NCBI Taxonomy" id="314565"/>
    <lineage>
        <taxon>Bacteria</taxon>
        <taxon>Pseudomonadati</taxon>
        <taxon>Pseudomonadota</taxon>
        <taxon>Gammaproteobacteria</taxon>
        <taxon>Lysobacterales</taxon>
        <taxon>Lysobacteraceae</taxon>
        <taxon>Xanthomonas</taxon>
    </lineage>
</organism>